<proteinExistence type="evidence at transcript level"/>
<dbReference type="EMBL" id="BC146250">
    <property type="protein sequence ID" value="AAI46251.1"/>
    <property type="molecule type" value="mRNA"/>
</dbReference>
<dbReference type="RefSeq" id="NP_001092532.1">
    <property type="nucleotide sequence ID" value="NM_001099062.1"/>
</dbReference>
<dbReference type="SMR" id="A6H7H7"/>
<dbReference type="FunCoup" id="A6H7H7">
    <property type="interactions" value="1946"/>
</dbReference>
<dbReference type="STRING" id="9913.ENSBTAP00000013287"/>
<dbReference type="PaxDb" id="9913-ENSBTAP00000013287"/>
<dbReference type="Ensembl" id="ENSBTAT00000013287.5">
    <property type="protein sequence ID" value="ENSBTAP00000013287.3"/>
    <property type="gene ID" value="ENSBTAG00000010071.6"/>
</dbReference>
<dbReference type="GeneID" id="534287"/>
<dbReference type="KEGG" id="bta:534287"/>
<dbReference type="CTD" id="26273"/>
<dbReference type="VEuPathDB" id="HostDB:ENSBTAG00000010071"/>
<dbReference type="VGNC" id="VGNC:28902">
    <property type="gene designation" value="FBXO3"/>
</dbReference>
<dbReference type="eggNOG" id="KOG4408">
    <property type="taxonomic scope" value="Eukaryota"/>
</dbReference>
<dbReference type="GeneTree" id="ENSGT00940000153571"/>
<dbReference type="HOGENOM" id="CLU_056869_0_0_1"/>
<dbReference type="InParanoid" id="A6H7H7"/>
<dbReference type="OMA" id="YVHDKDC"/>
<dbReference type="OrthoDB" id="2305498at2759"/>
<dbReference type="TreeFam" id="TF329795"/>
<dbReference type="UniPathway" id="UPA00143"/>
<dbReference type="Proteomes" id="UP000009136">
    <property type="component" value="Chromosome 15"/>
</dbReference>
<dbReference type="Bgee" id="ENSBTAG00000010071">
    <property type="expression patterns" value="Expressed in semen and 105 other cell types or tissues"/>
</dbReference>
<dbReference type="GO" id="GO:0005737">
    <property type="term" value="C:cytoplasm"/>
    <property type="evidence" value="ECO:0000318"/>
    <property type="project" value="GO_Central"/>
</dbReference>
<dbReference type="GO" id="GO:0005634">
    <property type="term" value="C:nucleus"/>
    <property type="evidence" value="ECO:0007669"/>
    <property type="project" value="UniProtKB-SubCell"/>
</dbReference>
<dbReference type="GO" id="GO:0019005">
    <property type="term" value="C:SCF ubiquitin ligase complex"/>
    <property type="evidence" value="ECO:0000250"/>
    <property type="project" value="UniProtKB"/>
</dbReference>
<dbReference type="GO" id="GO:1990756">
    <property type="term" value="F:ubiquitin-like ligase-substrate adaptor activity"/>
    <property type="evidence" value="ECO:0000250"/>
    <property type="project" value="UniProtKB"/>
</dbReference>
<dbReference type="GO" id="GO:0016567">
    <property type="term" value="P:protein ubiquitination"/>
    <property type="evidence" value="ECO:0007669"/>
    <property type="project" value="UniProtKB-UniPathway"/>
</dbReference>
<dbReference type="GO" id="GO:0032496">
    <property type="term" value="P:response to lipopolysaccharide"/>
    <property type="evidence" value="ECO:0000250"/>
    <property type="project" value="UniProtKB"/>
</dbReference>
<dbReference type="GO" id="GO:0031146">
    <property type="term" value="P:SCF-dependent proteasomal ubiquitin-dependent protein catabolic process"/>
    <property type="evidence" value="ECO:0000250"/>
    <property type="project" value="UniProtKB"/>
</dbReference>
<dbReference type="CDD" id="cd22084">
    <property type="entry name" value="F-box_FBXO3"/>
    <property type="match status" value="1"/>
</dbReference>
<dbReference type="FunFam" id="1.20.1280.50:FF:000019">
    <property type="entry name" value="F-box only protein 3"/>
    <property type="match status" value="1"/>
</dbReference>
<dbReference type="FunFam" id="2.60.40.1470:FF:000002">
    <property type="entry name" value="F-box only protein 3"/>
    <property type="match status" value="1"/>
</dbReference>
<dbReference type="Gene3D" id="1.20.1280.50">
    <property type="match status" value="1"/>
</dbReference>
<dbReference type="Gene3D" id="2.60.40.1470">
    <property type="entry name" value="ApaG domain"/>
    <property type="match status" value="1"/>
</dbReference>
<dbReference type="Gene3D" id="3.40.1580.10">
    <property type="entry name" value="SMI1/KNR4-like"/>
    <property type="match status" value="1"/>
</dbReference>
<dbReference type="InterPro" id="IPR007474">
    <property type="entry name" value="ApaG_domain"/>
</dbReference>
<dbReference type="InterPro" id="IPR036767">
    <property type="entry name" value="ApaG_sf"/>
</dbReference>
<dbReference type="InterPro" id="IPR036047">
    <property type="entry name" value="F-box-like_dom_sf"/>
</dbReference>
<dbReference type="InterPro" id="IPR001810">
    <property type="entry name" value="F-box_dom"/>
</dbReference>
<dbReference type="InterPro" id="IPR052121">
    <property type="entry name" value="F-box_SCF_Substrate_Recog"/>
</dbReference>
<dbReference type="InterPro" id="IPR018958">
    <property type="entry name" value="Knr4/Smi1-like_dom"/>
</dbReference>
<dbReference type="InterPro" id="IPR037883">
    <property type="entry name" value="Knr4/Smi1-like_sf"/>
</dbReference>
<dbReference type="NCBIfam" id="NF003967">
    <property type="entry name" value="PRK05461.1"/>
    <property type="match status" value="1"/>
</dbReference>
<dbReference type="PANTHER" id="PTHR46550">
    <property type="entry name" value="F-BOX ONLY PROTEIN 3"/>
    <property type="match status" value="1"/>
</dbReference>
<dbReference type="PANTHER" id="PTHR46550:SF6">
    <property type="entry name" value="F-BOX ONLY PROTEIN 3"/>
    <property type="match status" value="1"/>
</dbReference>
<dbReference type="Pfam" id="PF04379">
    <property type="entry name" value="DUF525"/>
    <property type="match status" value="1"/>
</dbReference>
<dbReference type="Pfam" id="PF12937">
    <property type="entry name" value="F-box-like"/>
    <property type="match status" value="1"/>
</dbReference>
<dbReference type="Pfam" id="PF09346">
    <property type="entry name" value="SMI1_KNR4"/>
    <property type="match status" value="1"/>
</dbReference>
<dbReference type="SMART" id="SM00256">
    <property type="entry name" value="FBOX"/>
    <property type="match status" value="1"/>
</dbReference>
<dbReference type="SMART" id="SM00860">
    <property type="entry name" value="SMI1_KNR4"/>
    <property type="match status" value="1"/>
</dbReference>
<dbReference type="SUPFAM" id="SSF110069">
    <property type="entry name" value="ApaG-like"/>
    <property type="match status" value="1"/>
</dbReference>
<dbReference type="SUPFAM" id="SSF81383">
    <property type="entry name" value="F-box domain"/>
    <property type="match status" value="1"/>
</dbReference>
<dbReference type="SUPFAM" id="SSF160631">
    <property type="entry name" value="SMI1/KNR4-like"/>
    <property type="match status" value="1"/>
</dbReference>
<dbReference type="PROSITE" id="PS51087">
    <property type="entry name" value="APAG"/>
    <property type="match status" value="1"/>
</dbReference>
<dbReference type="PROSITE" id="PS50181">
    <property type="entry name" value="FBOX"/>
    <property type="match status" value="1"/>
</dbReference>
<protein>
    <recommendedName>
        <fullName>F-box only protein 3</fullName>
    </recommendedName>
</protein>
<evidence type="ECO:0000250" key="1">
    <source>
        <dbReference type="UniProtKB" id="Q9DC63"/>
    </source>
</evidence>
<evidence type="ECO:0000250" key="2">
    <source>
        <dbReference type="UniProtKB" id="Q9UK99"/>
    </source>
</evidence>
<evidence type="ECO:0000255" key="3">
    <source>
        <dbReference type="PROSITE-ProRule" id="PRU00080"/>
    </source>
</evidence>
<evidence type="ECO:0000255" key="4">
    <source>
        <dbReference type="PROSITE-ProRule" id="PRU00412"/>
    </source>
</evidence>
<evidence type="ECO:0000256" key="5">
    <source>
        <dbReference type="SAM" id="MobiDB-lite"/>
    </source>
</evidence>
<organism>
    <name type="scientific">Bos taurus</name>
    <name type="common">Bovine</name>
    <dbReference type="NCBI Taxonomy" id="9913"/>
    <lineage>
        <taxon>Eukaryota</taxon>
        <taxon>Metazoa</taxon>
        <taxon>Chordata</taxon>
        <taxon>Craniata</taxon>
        <taxon>Vertebrata</taxon>
        <taxon>Euteleostomi</taxon>
        <taxon>Mammalia</taxon>
        <taxon>Eutheria</taxon>
        <taxon>Laurasiatheria</taxon>
        <taxon>Artiodactyla</taxon>
        <taxon>Ruminantia</taxon>
        <taxon>Pecora</taxon>
        <taxon>Bovidae</taxon>
        <taxon>Bovinae</taxon>
        <taxon>Bos</taxon>
    </lineage>
</organism>
<feature type="chain" id="PRO_0000396823" description="F-box only protein 3">
    <location>
        <begin position="1"/>
        <end position="469"/>
    </location>
</feature>
<feature type="domain" description="F-box" evidence="3">
    <location>
        <begin position="10"/>
        <end position="56"/>
    </location>
</feature>
<feature type="domain" description="ApaG" evidence="4">
    <location>
        <begin position="278"/>
        <end position="408"/>
    </location>
</feature>
<feature type="region of interest" description="Disordered" evidence="5">
    <location>
        <begin position="419"/>
        <end position="454"/>
    </location>
</feature>
<feature type="compositionally biased region" description="Acidic residues" evidence="5">
    <location>
        <begin position="419"/>
        <end position="449"/>
    </location>
</feature>
<keyword id="KW-0539">Nucleus</keyword>
<keyword id="KW-1185">Reference proteome</keyword>
<keyword id="KW-0833">Ubl conjugation pathway</keyword>
<accession>A6H7H7</accession>
<sequence length="469" mass="54129">MAAMDTESAPLTLESLPTDPLLLILSFLDYRDLINCCYVSRRLSQLSSHDPLWRRHCKKYWLISEEEKTQKNQCWKSLFIDTYSDVGRYIDHYAAIKKAWDDLKKYLEPRCPRMVLSLKEGAREEDLDAVEAQIGCKLPDDYRCSYRIHNGQKLVVPGLLGSMALSNHYRSEDLLDVDTAAGGFQQRQGLKSCLPLTFCIHTGLSQYIAVEAAEGRNKNEVFYQCPDQMARNPAAIDMFIIGATFTDWFTSYVNSVVSGGFPIIRDQIFRYVHDPECVATTGDITVSVSTSFLPELSSVHPPHYFFTYRIRIEMSKDALPEKACQLDSRYWRITNAKGDVEEVQGPGVVGEFPIISPGRVYEYTSCTTFSTTSGYMEGYYTFHFLYFKDKIFNVAIPRFHMACPTFRVSIARLEMGPDEYEEMEEEEEEEEEEDDDDSADMDESDDDEEERQRRVFDVPIRRRRCSRLF</sequence>
<comment type="function">
    <text evidence="1 2">Substrate recognition component of the SCF (SKP1-CUL1-F-box protein)-type E3 ubiquitin ligase complex, SCF(FBXO3), which mediates the ubiquitination and subsequent proteasomal degradation of target proteins. Mediates the ubiquitination of HIPK2 and probably that of EP300, leading to rapid degradation by the proteasome. In the presence of PML, HIPK2 ubiquitination still occurs, but degradation is prevented. PML, HIPK2 and FBXO3 may act synergically to activate p53/TP53-dependent transactivation. The SCF(FBXO3) also acts as a regulator of inflammation by mediating ubiquitination and degradation of FBXL2 in response to lipopolysaccharide (LPS) (By similarity). The SCF(FBXO3) complex specifically recognizes FBXL2 phosphorylated at 'Thr-404' and promotes its ubiquitination (By similarity).</text>
</comment>
<comment type="pathway">
    <text evidence="2">Protein modification; protein ubiquitination.</text>
</comment>
<comment type="subunit">
    <text evidence="2">Part of a SCF (SKP1-cullin-F-box) protein ligase complex SCF(FBXO3) consisting of FBXO3, SKP1, CUL1 and RBX1. Interacts with PML, interaction is direct and takes place either alone or within the SCF complex.</text>
</comment>
<comment type="subcellular location">
    <subcellularLocation>
        <location evidence="2">Nucleus</location>
    </subcellularLocation>
    <text evidence="2">Colocalizes with PML at the peripheries of nuclear bodies.</text>
</comment>
<reference key="1">
    <citation type="submission" date="2007-06" db="EMBL/GenBank/DDBJ databases">
        <authorList>
            <consortium name="NIH - Mammalian Gene Collection (MGC) project"/>
        </authorList>
    </citation>
    <scope>NUCLEOTIDE SEQUENCE [LARGE SCALE MRNA]</scope>
    <source>
        <strain>Hereford</strain>
        <tissue>Thalamus</tissue>
    </source>
</reference>
<gene>
    <name type="primary">FBXO3</name>
    <name type="synonym">FBX3</name>
</gene>
<name>FBX3_BOVIN</name>